<dbReference type="EC" id="7.1.1.-" evidence="1"/>
<dbReference type="EMBL" id="CP001344">
    <property type="protein sequence ID" value="ACL45737.1"/>
    <property type="molecule type" value="Genomic_DNA"/>
</dbReference>
<dbReference type="SMR" id="B8HQR6"/>
<dbReference type="STRING" id="395961.Cyan7425_3413"/>
<dbReference type="KEGG" id="cyn:Cyan7425_3413"/>
<dbReference type="eggNOG" id="COG0377">
    <property type="taxonomic scope" value="Bacteria"/>
</dbReference>
<dbReference type="HOGENOM" id="CLU_055737_2_1_3"/>
<dbReference type="OrthoDB" id="9786737at2"/>
<dbReference type="GO" id="GO:0031676">
    <property type="term" value="C:plasma membrane-derived thylakoid membrane"/>
    <property type="evidence" value="ECO:0007669"/>
    <property type="project" value="UniProtKB-SubCell"/>
</dbReference>
<dbReference type="GO" id="GO:0045271">
    <property type="term" value="C:respiratory chain complex I"/>
    <property type="evidence" value="ECO:0007669"/>
    <property type="project" value="TreeGrafter"/>
</dbReference>
<dbReference type="GO" id="GO:0051539">
    <property type="term" value="F:4 iron, 4 sulfur cluster binding"/>
    <property type="evidence" value="ECO:0007669"/>
    <property type="project" value="UniProtKB-KW"/>
</dbReference>
<dbReference type="GO" id="GO:0005506">
    <property type="term" value="F:iron ion binding"/>
    <property type="evidence" value="ECO:0007669"/>
    <property type="project" value="UniProtKB-UniRule"/>
</dbReference>
<dbReference type="GO" id="GO:0008137">
    <property type="term" value="F:NADH dehydrogenase (ubiquinone) activity"/>
    <property type="evidence" value="ECO:0007669"/>
    <property type="project" value="InterPro"/>
</dbReference>
<dbReference type="GO" id="GO:0048038">
    <property type="term" value="F:quinone binding"/>
    <property type="evidence" value="ECO:0007669"/>
    <property type="project" value="UniProtKB-KW"/>
</dbReference>
<dbReference type="GO" id="GO:0009060">
    <property type="term" value="P:aerobic respiration"/>
    <property type="evidence" value="ECO:0007669"/>
    <property type="project" value="TreeGrafter"/>
</dbReference>
<dbReference type="GO" id="GO:0015990">
    <property type="term" value="P:electron transport coupled proton transport"/>
    <property type="evidence" value="ECO:0007669"/>
    <property type="project" value="TreeGrafter"/>
</dbReference>
<dbReference type="GO" id="GO:0019684">
    <property type="term" value="P:photosynthesis, light reaction"/>
    <property type="evidence" value="ECO:0007669"/>
    <property type="project" value="UniProtKB-UniRule"/>
</dbReference>
<dbReference type="FunFam" id="3.40.50.12280:FF:000003">
    <property type="entry name" value="NAD(P)H-quinone oxidoreductase subunit K, chloroplastic"/>
    <property type="match status" value="1"/>
</dbReference>
<dbReference type="Gene3D" id="3.40.50.12280">
    <property type="match status" value="1"/>
</dbReference>
<dbReference type="HAMAP" id="MF_01356">
    <property type="entry name" value="NDH1_NuoB"/>
    <property type="match status" value="1"/>
</dbReference>
<dbReference type="InterPro" id="IPR006137">
    <property type="entry name" value="NADH_UbQ_OxRdtase-like_20kDa"/>
</dbReference>
<dbReference type="InterPro" id="IPR006138">
    <property type="entry name" value="NADH_UQ_OxRdtase_20Kd_su"/>
</dbReference>
<dbReference type="NCBIfam" id="TIGR01957">
    <property type="entry name" value="nuoB_fam"/>
    <property type="match status" value="1"/>
</dbReference>
<dbReference type="NCBIfam" id="NF005012">
    <property type="entry name" value="PRK06411.1"/>
    <property type="match status" value="1"/>
</dbReference>
<dbReference type="PANTHER" id="PTHR11995">
    <property type="entry name" value="NADH DEHYDROGENASE"/>
    <property type="match status" value="1"/>
</dbReference>
<dbReference type="PANTHER" id="PTHR11995:SF14">
    <property type="entry name" value="NADH DEHYDROGENASE [UBIQUINONE] IRON-SULFUR PROTEIN 7, MITOCHONDRIAL"/>
    <property type="match status" value="1"/>
</dbReference>
<dbReference type="Pfam" id="PF01058">
    <property type="entry name" value="Oxidored_q6"/>
    <property type="match status" value="1"/>
</dbReference>
<dbReference type="SUPFAM" id="SSF56770">
    <property type="entry name" value="HydA/Nqo6-like"/>
    <property type="match status" value="1"/>
</dbReference>
<dbReference type="PROSITE" id="PS01150">
    <property type="entry name" value="COMPLEX1_20K"/>
    <property type="match status" value="1"/>
</dbReference>
<sequence>MNTLPVKQSQLINPIAAPEVPQELQENIILTSLNDVYSWCRLSSLWPLMYGTACCFIEFAAMIGSRFDFDRFGLVPRCSPRQADLLITAGTITMKMAPALVKLYEQMPEPKYVIAMGACTITGGMFSTDSPTAVRGVDKLIPVDIYLPGCPPRPEAIMDAIVKLRKKIGNEHLDERGQLQQTHRFHSVKHGMKSVAPILTGEYLAAPTRQAPPQQLAEALGLPLPALEAIEKEAVERN</sequence>
<gene>
    <name evidence="1" type="primary">ndhK1</name>
    <name type="ordered locus">Cyan7425_3413</name>
</gene>
<name>NDHK1_CYAP4</name>
<comment type="function">
    <text evidence="1">NDH-1 shuttles electrons from an unknown electron donor, via FMN and iron-sulfur (Fe-S) centers, to quinones in the respiratory and/or the photosynthetic chain. The immediate electron acceptor for the enzyme in this species is believed to be plastoquinone. Couples the redox reaction to proton translocation, and thus conserves the redox energy in a proton gradient. Cyanobacterial NDH-1 also plays a role in inorganic carbon-concentration.</text>
</comment>
<comment type="catalytic activity">
    <reaction evidence="1">
        <text>a plastoquinone + NADH + (n+1) H(+)(in) = a plastoquinol + NAD(+) + n H(+)(out)</text>
        <dbReference type="Rhea" id="RHEA:42608"/>
        <dbReference type="Rhea" id="RHEA-COMP:9561"/>
        <dbReference type="Rhea" id="RHEA-COMP:9562"/>
        <dbReference type="ChEBI" id="CHEBI:15378"/>
        <dbReference type="ChEBI" id="CHEBI:17757"/>
        <dbReference type="ChEBI" id="CHEBI:57540"/>
        <dbReference type="ChEBI" id="CHEBI:57945"/>
        <dbReference type="ChEBI" id="CHEBI:62192"/>
    </reaction>
</comment>
<comment type="catalytic activity">
    <reaction evidence="1">
        <text>a plastoquinone + NADPH + (n+1) H(+)(in) = a plastoquinol + NADP(+) + n H(+)(out)</text>
        <dbReference type="Rhea" id="RHEA:42612"/>
        <dbReference type="Rhea" id="RHEA-COMP:9561"/>
        <dbReference type="Rhea" id="RHEA-COMP:9562"/>
        <dbReference type="ChEBI" id="CHEBI:15378"/>
        <dbReference type="ChEBI" id="CHEBI:17757"/>
        <dbReference type="ChEBI" id="CHEBI:57783"/>
        <dbReference type="ChEBI" id="CHEBI:58349"/>
        <dbReference type="ChEBI" id="CHEBI:62192"/>
    </reaction>
</comment>
<comment type="cofactor">
    <cofactor evidence="1">
        <name>[4Fe-4S] cluster</name>
        <dbReference type="ChEBI" id="CHEBI:49883"/>
    </cofactor>
    <text evidence="1">Binds 1 [4Fe-4S] cluster.</text>
</comment>
<comment type="subunit">
    <text evidence="1">NDH-1 can be composed of about 15 different subunits; different subcomplexes with different compositions have been identified which probably have different functions.</text>
</comment>
<comment type="subcellular location">
    <subcellularLocation>
        <location evidence="1">Cellular thylakoid membrane</location>
        <topology evidence="1">Peripheral membrane protein</topology>
        <orientation evidence="1">Cytoplasmic side</orientation>
    </subcellularLocation>
</comment>
<comment type="similarity">
    <text evidence="1">Belongs to the complex I 20 kDa subunit family.</text>
</comment>
<accession>B8HQR6</accession>
<feature type="chain" id="PRO_0000376187" description="NAD(P)H-quinone oxidoreductase subunit K 1">
    <location>
        <begin position="1"/>
        <end position="238"/>
    </location>
</feature>
<feature type="binding site" evidence="1">
    <location>
        <position position="54"/>
    </location>
    <ligand>
        <name>[4Fe-4S] cluster</name>
        <dbReference type="ChEBI" id="CHEBI:49883"/>
    </ligand>
</feature>
<feature type="binding site" evidence="1">
    <location>
        <position position="55"/>
    </location>
    <ligand>
        <name>[4Fe-4S] cluster</name>
        <dbReference type="ChEBI" id="CHEBI:49883"/>
    </ligand>
</feature>
<feature type="binding site" evidence="1">
    <location>
        <position position="119"/>
    </location>
    <ligand>
        <name>[4Fe-4S] cluster</name>
        <dbReference type="ChEBI" id="CHEBI:49883"/>
    </ligand>
</feature>
<feature type="binding site" evidence="1">
    <location>
        <position position="150"/>
    </location>
    <ligand>
        <name>[4Fe-4S] cluster</name>
        <dbReference type="ChEBI" id="CHEBI:49883"/>
    </ligand>
</feature>
<evidence type="ECO:0000255" key="1">
    <source>
        <dbReference type="HAMAP-Rule" id="MF_01356"/>
    </source>
</evidence>
<proteinExistence type="inferred from homology"/>
<reference key="1">
    <citation type="journal article" date="2011" name="MBio">
        <title>Novel metabolic attributes of the genus Cyanothece, comprising a group of unicellular nitrogen-fixing Cyanobacteria.</title>
        <authorList>
            <person name="Bandyopadhyay A."/>
            <person name="Elvitigala T."/>
            <person name="Welsh E."/>
            <person name="Stockel J."/>
            <person name="Liberton M."/>
            <person name="Min H."/>
            <person name="Sherman L.A."/>
            <person name="Pakrasi H.B."/>
        </authorList>
    </citation>
    <scope>NUCLEOTIDE SEQUENCE [LARGE SCALE GENOMIC DNA]</scope>
    <source>
        <strain>PCC 7425 / ATCC 29141</strain>
    </source>
</reference>
<keyword id="KW-0004">4Fe-4S</keyword>
<keyword id="KW-0408">Iron</keyword>
<keyword id="KW-0411">Iron-sulfur</keyword>
<keyword id="KW-0472">Membrane</keyword>
<keyword id="KW-0479">Metal-binding</keyword>
<keyword id="KW-0520">NAD</keyword>
<keyword id="KW-0521">NADP</keyword>
<keyword id="KW-0618">Plastoquinone</keyword>
<keyword id="KW-0874">Quinone</keyword>
<keyword id="KW-0793">Thylakoid</keyword>
<keyword id="KW-1278">Translocase</keyword>
<keyword id="KW-0813">Transport</keyword>
<protein>
    <recommendedName>
        <fullName evidence="1">NAD(P)H-quinone oxidoreductase subunit K 1</fullName>
        <ecNumber evidence="1">7.1.1.-</ecNumber>
    </recommendedName>
    <alternativeName>
        <fullName evidence="1">NAD(P)H dehydrogenase I subunit K 1</fullName>
    </alternativeName>
    <alternativeName>
        <fullName evidence="1">NDH-1 subunit K 1</fullName>
        <shortName evidence="1">NDH-K 1</shortName>
    </alternativeName>
</protein>
<organism>
    <name type="scientific">Cyanothece sp. (strain PCC 7425 / ATCC 29141)</name>
    <dbReference type="NCBI Taxonomy" id="395961"/>
    <lineage>
        <taxon>Bacteria</taxon>
        <taxon>Bacillati</taxon>
        <taxon>Cyanobacteriota</taxon>
        <taxon>Cyanophyceae</taxon>
        <taxon>Gomontiellales</taxon>
        <taxon>Cyanothecaceae</taxon>
        <taxon>Cyanothece</taxon>
    </lineage>
</organism>